<proteinExistence type="inferred from homology"/>
<accession>Q2NQV7</accession>
<dbReference type="EC" id="5.1.3.20" evidence="1"/>
<dbReference type="EMBL" id="AP008232">
    <property type="protein sequence ID" value="BAE75468.1"/>
    <property type="molecule type" value="Genomic_DNA"/>
</dbReference>
<dbReference type="RefSeq" id="WP_011412004.1">
    <property type="nucleotide sequence ID" value="NC_007712.1"/>
</dbReference>
<dbReference type="SMR" id="Q2NQV7"/>
<dbReference type="STRING" id="343509.SG2193"/>
<dbReference type="KEGG" id="sgl:SG2193"/>
<dbReference type="eggNOG" id="COG0451">
    <property type="taxonomic scope" value="Bacteria"/>
</dbReference>
<dbReference type="HOGENOM" id="CLU_007383_1_3_6"/>
<dbReference type="OrthoDB" id="9803010at2"/>
<dbReference type="BioCyc" id="SGLO343509:SGP1_RS20230-MONOMER"/>
<dbReference type="UniPathway" id="UPA00356">
    <property type="reaction ID" value="UER00440"/>
</dbReference>
<dbReference type="Proteomes" id="UP000001932">
    <property type="component" value="Chromosome"/>
</dbReference>
<dbReference type="GO" id="GO:0008712">
    <property type="term" value="F:ADP-glyceromanno-heptose 6-epimerase activity"/>
    <property type="evidence" value="ECO:0007669"/>
    <property type="project" value="UniProtKB-UniRule"/>
</dbReference>
<dbReference type="GO" id="GO:0050661">
    <property type="term" value="F:NADP binding"/>
    <property type="evidence" value="ECO:0007669"/>
    <property type="project" value="InterPro"/>
</dbReference>
<dbReference type="GO" id="GO:0097171">
    <property type="term" value="P:ADP-L-glycero-beta-D-manno-heptose biosynthetic process"/>
    <property type="evidence" value="ECO:0007669"/>
    <property type="project" value="UniProtKB-UniPathway"/>
</dbReference>
<dbReference type="GO" id="GO:0005975">
    <property type="term" value="P:carbohydrate metabolic process"/>
    <property type="evidence" value="ECO:0007669"/>
    <property type="project" value="UniProtKB-UniRule"/>
</dbReference>
<dbReference type="CDD" id="cd05248">
    <property type="entry name" value="ADP_GME_SDR_e"/>
    <property type="match status" value="1"/>
</dbReference>
<dbReference type="Gene3D" id="3.40.50.720">
    <property type="entry name" value="NAD(P)-binding Rossmann-like Domain"/>
    <property type="match status" value="1"/>
</dbReference>
<dbReference type="Gene3D" id="3.90.25.10">
    <property type="entry name" value="UDP-galactose 4-epimerase, domain 1"/>
    <property type="match status" value="1"/>
</dbReference>
<dbReference type="HAMAP" id="MF_01601">
    <property type="entry name" value="Heptose_epimerase"/>
    <property type="match status" value="1"/>
</dbReference>
<dbReference type="InterPro" id="IPR001509">
    <property type="entry name" value="Epimerase_deHydtase"/>
</dbReference>
<dbReference type="InterPro" id="IPR011912">
    <property type="entry name" value="Heptose_epim"/>
</dbReference>
<dbReference type="InterPro" id="IPR036291">
    <property type="entry name" value="NAD(P)-bd_dom_sf"/>
</dbReference>
<dbReference type="NCBIfam" id="TIGR02197">
    <property type="entry name" value="heptose_epim"/>
    <property type="match status" value="1"/>
</dbReference>
<dbReference type="NCBIfam" id="NF008360">
    <property type="entry name" value="PRK11150.1"/>
    <property type="match status" value="1"/>
</dbReference>
<dbReference type="PANTHER" id="PTHR43103:SF3">
    <property type="entry name" value="ADP-L-GLYCERO-D-MANNO-HEPTOSE-6-EPIMERASE"/>
    <property type="match status" value="1"/>
</dbReference>
<dbReference type="PANTHER" id="PTHR43103">
    <property type="entry name" value="NUCLEOSIDE-DIPHOSPHATE-SUGAR EPIMERASE"/>
    <property type="match status" value="1"/>
</dbReference>
<dbReference type="Pfam" id="PF01370">
    <property type="entry name" value="Epimerase"/>
    <property type="match status" value="1"/>
</dbReference>
<dbReference type="SUPFAM" id="SSF51735">
    <property type="entry name" value="NAD(P)-binding Rossmann-fold domains"/>
    <property type="match status" value="1"/>
</dbReference>
<name>HLDD_SODGM</name>
<evidence type="ECO:0000255" key="1">
    <source>
        <dbReference type="HAMAP-Rule" id="MF_01601"/>
    </source>
</evidence>
<sequence>MIVVTGGAGFIGSNIVKALNQIGYNDVLVVDNLKDGTKYANLVDLNISDYMDKEDFIASIVAGDDFGDIDAVFHEGACSSTTEWDGKYMMDNNYQYSKELLHYCMERTIPFLYASSAATYGGRTEHFIEDRQYEQPLNVYGYSKFLFDQYVRALLPQAESQICGFRYFNVYGPREGHKGGMASVAFHLNNQINAGENPKLFAGSEGFKRDFIYVGDVAAVNLWFWQNNVSGIFNCGTGRAESFQAVSDAVLDYHKKGQLEYIPFPEKLKGRYQAYTQADLTQLRAAGYTQPFKTVAEGVAEYLRWLNHNY</sequence>
<gene>
    <name evidence="1" type="primary">hldD</name>
    <name type="ordered locus">SG2193</name>
</gene>
<organism>
    <name type="scientific">Sodalis glossinidius (strain morsitans)</name>
    <dbReference type="NCBI Taxonomy" id="343509"/>
    <lineage>
        <taxon>Bacteria</taxon>
        <taxon>Pseudomonadati</taxon>
        <taxon>Pseudomonadota</taxon>
        <taxon>Gammaproteobacteria</taxon>
        <taxon>Enterobacterales</taxon>
        <taxon>Bruguierivoracaceae</taxon>
        <taxon>Sodalis</taxon>
    </lineage>
</organism>
<feature type="chain" id="PRO_0000255745" description="ADP-L-glycero-D-manno-heptose-6-epimerase">
    <location>
        <begin position="1"/>
        <end position="310"/>
    </location>
</feature>
<feature type="active site" description="Proton acceptor" evidence="1">
    <location>
        <position position="140"/>
    </location>
</feature>
<feature type="active site" description="Proton acceptor" evidence="1">
    <location>
        <position position="178"/>
    </location>
</feature>
<feature type="binding site" evidence="1">
    <location>
        <begin position="10"/>
        <end position="11"/>
    </location>
    <ligand>
        <name>NADP(+)</name>
        <dbReference type="ChEBI" id="CHEBI:58349"/>
    </ligand>
</feature>
<feature type="binding site" evidence="1">
    <location>
        <begin position="31"/>
        <end position="32"/>
    </location>
    <ligand>
        <name>NADP(+)</name>
        <dbReference type="ChEBI" id="CHEBI:58349"/>
    </ligand>
</feature>
<feature type="binding site" evidence="1">
    <location>
        <position position="38"/>
    </location>
    <ligand>
        <name>NADP(+)</name>
        <dbReference type="ChEBI" id="CHEBI:58349"/>
    </ligand>
</feature>
<feature type="binding site" evidence="1">
    <location>
        <position position="53"/>
    </location>
    <ligand>
        <name>NADP(+)</name>
        <dbReference type="ChEBI" id="CHEBI:58349"/>
    </ligand>
</feature>
<feature type="binding site" evidence="1">
    <location>
        <begin position="75"/>
        <end position="79"/>
    </location>
    <ligand>
        <name>NADP(+)</name>
        <dbReference type="ChEBI" id="CHEBI:58349"/>
    </ligand>
</feature>
<feature type="binding site" evidence="1">
    <location>
        <position position="92"/>
    </location>
    <ligand>
        <name>NADP(+)</name>
        <dbReference type="ChEBI" id="CHEBI:58349"/>
    </ligand>
</feature>
<feature type="binding site" evidence="1">
    <location>
        <position position="144"/>
    </location>
    <ligand>
        <name>NADP(+)</name>
        <dbReference type="ChEBI" id="CHEBI:58349"/>
    </ligand>
</feature>
<feature type="binding site" evidence="1">
    <location>
        <position position="169"/>
    </location>
    <ligand>
        <name>substrate</name>
    </ligand>
</feature>
<feature type="binding site" evidence="1">
    <location>
        <position position="170"/>
    </location>
    <ligand>
        <name>NADP(+)</name>
        <dbReference type="ChEBI" id="CHEBI:58349"/>
    </ligand>
</feature>
<feature type="binding site" evidence="1">
    <location>
        <position position="178"/>
    </location>
    <ligand>
        <name>NADP(+)</name>
        <dbReference type="ChEBI" id="CHEBI:58349"/>
    </ligand>
</feature>
<feature type="binding site" evidence="1">
    <location>
        <position position="180"/>
    </location>
    <ligand>
        <name>substrate</name>
    </ligand>
</feature>
<feature type="binding site" evidence="1">
    <location>
        <position position="187"/>
    </location>
    <ligand>
        <name>substrate</name>
    </ligand>
</feature>
<feature type="binding site" evidence="1">
    <location>
        <begin position="201"/>
        <end position="204"/>
    </location>
    <ligand>
        <name>substrate</name>
    </ligand>
</feature>
<feature type="binding site" evidence="1">
    <location>
        <position position="209"/>
    </location>
    <ligand>
        <name>substrate</name>
    </ligand>
</feature>
<feature type="binding site" evidence="1">
    <location>
        <position position="272"/>
    </location>
    <ligand>
        <name>substrate</name>
    </ligand>
</feature>
<protein>
    <recommendedName>
        <fullName evidence="1">ADP-L-glycero-D-manno-heptose-6-epimerase</fullName>
        <ecNumber evidence="1">5.1.3.20</ecNumber>
    </recommendedName>
    <alternativeName>
        <fullName evidence="1">ADP-L-glycero-beta-D-manno-heptose-6-epimerase</fullName>
        <shortName evidence="1">ADP-glyceromanno-heptose 6-epimerase</shortName>
        <shortName evidence="1">ADP-hep 6-epimerase</shortName>
        <shortName evidence="1">AGME</shortName>
    </alternativeName>
</protein>
<comment type="function">
    <text evidence="1">Catalyzes the interconversion between ADP-D-glycero-beta-D-manno-heptose and ADP-L-glycero-beta-D-manno-heptose via an epimerization at carbon 6 of the heptose.</text>
</comment>
<comment type="catalytic activity">
    <reaction evidence="1">
        <text>ADP-D-glycero-beta-D-manno-heptose = ADP-L-glycero-beta-D-manno-heptose</text>
        <dbReference type="Rhea" id="RHEA:17577"/>
        <dbReference type="ChEBI" id="CHEBI:59967"/>
        <dbReference type="ChEBI" id="CHEBI:61506"/>
        <dbReference type="EC" id="5.1.3.20"/>
    </reaction>
</comment>
<comment type="cofactor">
    <cofactor evidence="1">
        <name>NADP(+)</name>
        <dbReference type="ChEBI" id="CHEBI:58349"/>
    </cofactor>
    <text evidence="1">Binds 1 NADP(+) per subunit.</text>
</comment>
<comment type="pathway">
    <text evidence="1">Nucleotide-sugar biosynthesis; ADP-L-glycero-beta-D-manno-heptose biosynthesis; ADP-L-glycero-beta-D-manno-heptose from D-glycero-beta-D-manno-heptose 7-phosphate: step 4/4.</text>
</comment>
<comment type="subunit">
    <text evidence="1">Homopentamer.</text>
</comment>
<comment type="domain">
    <text evidence="1">Contains a large N-terminal NADP-binding domain, and a smaller C-terminal substrate-binding domain.</text>
</comment>
<comment type="similarity">
    <text evidence="1">Belongs to the NAD(P)-dependent epimerase/dehydratase family. HldD subfamily.</text>
</comment>
<keyword id="KW-0119">Carbohydrate metabolism</keyword>
<keyword id="KW-0413">Isomerase</keyword>
<keyword id="KW-0521">NADP</keyword>
<reference key="1">
    <citation type="journal article" date="2006" name="Genome Res.">
        <title>Massive genome erosion and functional adaptations provide insights into the symbiotic lifestyle of Sodalis glossinidius in the tsetse host.</title>
        <authorList>
            <person name="Toh H."/>
            <person name="Weiss B.L."/>
            <person name="Perkin S.A.H."/>
            <person name="Yamashita A."/>
            <person name="Oshima K."/>
            <person name="Hattori M."/>
            <person name="Aksoy S."/>
        </authorList>
    </citation>
    <scope>NUCLEOTIDE SEQUENCE [LARGE SCALE GENOMIC DNA]</scope>
    <source>
        <strain>morsitans</strain>
    </source>
</reference>